<keyword id="KW-0131">Cell cycle</keyword>
<keyword id="KW-0132">Cell division</keyword>
<keyword id="KW-0137">Centromere</keyword>
<keyword id="KW-0158">Chromosome</keyword>
<keyword id="KW-0159">Chromosome partition</keyword>
<keyword id="KW-0175">Coiled coil</keyword>
<keyword id="KW-0963">Cytoplasm</keyword>
<keyword id="KW-0206">Cytoskeleton</keyword>
<keyword id="KW-0995">Kinetochore</keyword>
<keyword id="KW-0493">Microtubule</keyword>
<keyword id="KW-0498">Mitosis</keyword>
<keyword id="KW-0539">Nucleus</keyword>
<keyword id="KW-1185">Reference proteome</keyword>
<protein>
    <recommendedName>
        <fullName>DASH complex subunit duo1</fullName>
    </recommendedName>
    <alternativeName>
        <fullName>Outer kinetochore protein duo1</fullName>
    </alternativeName>
</protein>
<reference key="1">
    <citation type="journal article" date="2002" name="Nature">
        <title>The genome sequence of Schizosaccharomyces pombe.</title>
        <authorList>
            <person name="Wood V."/>
            <person name="Gwilliam R."/>
            <person name="Rajandream M.A."/>
            <person name="Lyne M.H."/>
            <person name="Lyne R."/>
            <person name="Stewart A."/>
            <person name="Sgouros J.G."/>
            <person name="Peat N."/>
            <person name="Hayles J."/>
            <person name="Baker S.G."/>
            <person name="Basham D."/>
            <person name="Bowman S."/>
            <person name="Brooks K."/>
            <person name="Brown D."/>
            <person name="Brown S."/>
            <person name="Chillingworth T."/>
            <person name="Churcher C.M."/>
            <person name="Collins M."/>
            <person name="Connor R."/>
            <person name="Cronin A."/>
            <person name="Davis P."/>
            <person name="Feltwell T."/>
            <person name="Fraser A."/>
            <person name="Gentles S."/>
            <person name="Goble A."/>
            <person name="Hamlin N."/>
            <person name="Harris D.E."/>
            <person name="Hidalgo J."/>
            <person name="Hodgson G."/>
            <person name="Holroyd S."/>
            <person name="Hornsby T."/>
            <person name="Howarth S."/>
            <person name="Huckle E.J."/>
            <person name="Hunt S."/>
            <person name="Jagels K."/>
            <person name="James K.D."/>
            <person name="Jones L."/>
            <person name="Jones M."/>
            <person name="Leather S."/>
            <person name="McDonald S."/>
            <person name="McLean J."/>
            <person name="Mooney P."/>
            <person name="Moule S."/>
            <person name="Mungall K.L."/>
            <person name="Murphy L.D."/>
            <person name="Niblett D."/>
            <person name="Odell C."/>
            <person name="Oliver K."/>
            <person name="O'Neil S."/>
            <person name="Pearson D."/>
            <person name="Quail M.A."/>
            <person name="Rabbinowitsch E."/>
            <person name="Rutherford K.M."/>
            <person name="Rutter S."/>
            <person name="Saunders D."/>
            <person name="Seeger K."/>
            <person name="Sharp S."/>
            <person name="Skelton J."/>
            <person name="Simmonds M.N."/>
            <person name="Squares R."/>
            <person name="Squares S."/>
            <person name="Stevens K."/>
            <person name="Taylor K."/>
            <person name="Taylor R.G."/>
            <person name="Tivey A."/>
            <person name="Walsh S.V."/>
            <person name="Warren T."/>
            <person name="Whitehead S."/>
            <person name="Woodward J.R."/>
            <person name="Volckaert G."/>
            <person name="Aert R."/>
            <person name="Robben J."/>
            <person name="Grymonprez B."/>
            <person name="Weltjens I."/>
            <person name="Vanstreels E."/>
            <person name="Rieger M."/>
            <person name="Schaefer M."/>
            <person name="Mueller-Auer S."/>
            <person name="Gabel C."/>
            <person name="Fuchs M."/>
            <person name="Duesterhoeft A."/>
            <person name="Fritzc C."/>
            <person name="Holzer E."/>
            <person name="Moestl D."/>
            <person name="Hilbert H."/>
            <person name="Borzym K."/>
            <person name="Langer I."/>
            <person name="Beck A."/>
            <person name="Lehrach H."/>
            <person name="Reinhardt R."/>
            <person name="Pohl T.M."/>
            <person name="Eger P."/>
            <person name="Zimmermann W."/>
            <person name="Wedler H."/>
            <person name="Wambutt R."/>
            <person name="Purnelle B."/>
            <person name="Goffeau A."/>
            <person name="Cadieu E."/>
            <person name="Dreano S."/>
            <person name="Gloux S."/>
            <person name="Lelaure V."/>
            <person name="Mottier S."/>
            <person name="Galibert F."/>
            <person name="Aves S.J."/>
            <person name="Xiang Z."/>
            <person name="Hunt C."/>
            <person name="Moore K."/>
            <person name="Hurst S.M."/>
            <person name="Lucas M."/>
            <person name="Rochet M."/>
            <person name="Gaillardin C."/>
            <person name="Tallada V.A."/>
            <person name="Garzon A."/>
            <person name="Thode G."/>
            <person name="Daga R.R."/>
            <person name="Cruzado L."/>
            <person name="Jimenez J."/>
            <person name="Sanchez M."/>
            <person name="del Rey F."/>
            <person name="Benito J."/>
            <person name="Dominguez A."/>
            <person name="Revuelta J.L."/>
            <person name="Moreno S."/>
            <person name="Armstrong J."/>
            <person name="Forsburg S.L."/>
            <person name="Cerutti L."/>
            <person name="Lowe T."/>
            <person name="McCombie W.R."/>
            <person name="Paulsen I."/>
            <person name="Potashkin J."/>
            <person name="Shpakovski G.V."/>
            <person name="Ussery D."/>
            <person name="Barrell B.G."/>
            <person name="Nurse P."/>
        </authorList>
    </citation>
    <scope>NUCLEOTIDE SEQUENCE [LARGE SCALE GENOMIC DNA]</scope>
    <source>
        <strain>972 / ATCC 24843</strain>
    </source>
</reference>
<reference key="2">
    <citation type="journal article" date="2006" name="Nat. Biotechnol.">
        <title>ORFeome cloning and global analysis of protein localization in the fission yeast Schizosaccharomyces pombe.</title>
        <authorList>
            <person name="Matsuyama A."/>
            <person name="Arai R."/>
            <person name="Yashiroda Y."/>
            <person name="Shirai A."/>
            <person name="Kamata A."/>
            <person name="Sekido S."/>
            <person name="Kobayashi Y."/>
            <person name="Hashimoto A."/>
            <person name="Hamamoto M."/>
            <person name="Hiraoka Y."/>
            <person name="Horinouchi S."/>
            <person name="Yoshida M."/>
        </authorList>
    </citation>
    <scope>IDENTIFICATION OF FRAMESHIFT</scope>
    <source>
        <strain>972 / ATCC 24843</strain>
        <strain>JY3</strain>
    </source>
</reference>
<reference key="3">
    <citation type="journal article" date="2005" name="EMBO J.">
        <title>Molecular analysis of kinetochore architecture in fission yeast.</title>
        <authorList>
            <person name="Liu X."/>
            <person name="McLeod I."/>
            <person name="Anderson S."/>
            <person name="Yates J.R. III"/>
            <person name="He X."/>
        </authorList>
    </citation>
    <scope>FUNCTION</scope>
    <scope>IDENTIFICATION IN THE DASH COMPLEX</scope>
</reference>
<reference key="4">
    <citation type="journal article" date="2005" name="EMBO J.">
        <title>The DASH complex and Klp5/Klp6 kinesin coordinate bipolar chromosome attachment in fission yeast.</title>
        <authorList>
            <person name="Sanchez-Perez I."/>
            <person name="Renwick S.J."/>
            <person name="Crawley K."/>
            <person name="Karig I."/>
            <person name="Buck V."/>
            <person name="Meadows J.C."/>
            <person name="Franco-Sanchez A."/>
            <person name="Fleig U."/>
            <person name="Toda T."/>
            <person name="Millar J.B."/>
        </authorList>
    </citation>
    <scope>FUNCTION</scope>
    <scope>DISRUPTION PHENOTYPE</scope>
</reference>
<reference key="5">
    <citation type="journal article" date="2008" name="Mol. Biol. Cell">
        <title>Sister kinetochore recapture in fission yeast occurs by two distinct mechanisms, both requiring Dam1 and Klp2.</title>
        <authorList>
            <person name="Gachet Y."/>
            <person name="Reyes C."/>
            <person name="Courtheoux T."/>
            <person name="Goldstone S."/>
            <person name="Gay G."/>
            <person name="Serrurier C."/>
            <person name="Tournier S."/>
        </authorList>
    </citation>
    <scope>FUNCTION</scope>
</reference>
<reference key="6">
    <citation type="journal article" date="2010" name="Proc. Natl. Acad. Sci. U.S.A.">
        <title>A non-ring-like form of the Dam1 complex modulates microtubule dynamics in fission yeast.</title>
        <authorList>
            <person name="Gao Q."/>
            <person name="Courtheoux T."/>
            <person name="Gachet Y."/>
            <person name="Tournier S."/>
            <person name="He X."/>
        </authorList>
    </citation>
    <scope>FUNCTION</scope>
    <scope>SUBUNIT</scope>
    <scope>SUBCELLULAR LOCATION</scope>
</reference>
<name>DUO1_SCHPO</name>
<organism>
    <name type="scientific">Schizosaccharomyces pombe (strain 972 / ATCC 24843)</name>
    <name type="common">Fission yeast</name>
    <dbReference type="NCBI Taxonomy" id="284812"/>
    <lineage>
        <taxon>Eukaryota</taxon>
        <taxon>Fungi</taxon>
        <taxon>Dikarya</taxon>
        <taxon>Ascomycota</taxon>
        <taxon>Taphrinomycotina</taxon>
        <taxon>Schizosaccharomycetes</taxon>
        <taxon>Schizosaccharomycetales</taxon>
        <taxon>Schizosaccharomycetaceae</taxon>
        <taxon>Schizosaccharomyces</taxon>
    </lineage>
</organism>
<evidence type="ECO:0000250" key="1">
    <source>
        <dbReference type="UniProtKB" id="P53168"/>
    </source>
</evidence>
<evidence type="ECO:0000255" key="2"/>
<evidence type="ECO:0000256" key="3">
    <source>
        <dbReference type="SAM" id="MobiDB-lite"/>
    </source>
</evidence>
<evidence type="ECO:0000269" key="4">
    <source>
    </source>
</evidence>
<evidence type="ECO:0000269" key="5">
    <source>
    </source>
</evidence>
<evidence type="ECO:0000269" key="6">
    <source>
    </source>
</evidence>
<evidence type="ECO:0000269" key="7">
    <source>
    </source>
</evidence>
<evidence type="ECO:0000305" key="8"/>
<evidence type="ECO:0000305" key="9">
    <source>
    </source>
</evidence>
<comment type="function">
    <text evidence="4 5 6 7">Component of the DASH complex that connects microtubules with kinetochores and couples microtubule depolymerisation to chromosome movement; it is involved in retrieving kinetochores to the spindle poles before their re-orientation on the spindle in early mitosis and allows microtubule depolymerization to pull chromosomes apart and resist detachment during anaphase (PubMed:16079914, PubMed:20624975). Kinetochores, consisting of a centromere-associated inner segment and a microtubule-contacting outer segment, play a crucial role in chromosome segregation by mediating the physical connection between centromeric DNA and microtubules (PubMed:16079914, PubMed:20624975). Kinetochores also serve as an input point for the spindle assembly checkpoint, which delays anaphase until all chromosomes have bioriented on the mitotic spindle (PubMed:16079915). The DASH complex mediates bipolar kinetochore-microtubule attachments and facilitates the formation of additional interactions between outer kinetochore components and spindle microtubules (PubMed:16079914). During chromosome movement along the microtubule, it is required both for the sliding of kinetochores along the lateral side of the microtubule and also for microtubule end-on pulling on the kinetochore (PubMed:18256284). Modulates cytoplasmic microtubule dynamics by tracking the plus-end of shortening microtubules and slowing their depolymerization (PubMed:20624975).</text>
</comment>
<comment type="subunit">
    <text evidence="1 4 7">Component of the DASH complex consisting of ask1, dad1, dad2, dad3, dad4, dam1, duo1, dad5, spc19 and spc34, with a stoichiometry of one copy of each subunit per complex (PubMed:16079914). Multiple DASH complexes oligomerize to form a ring that encircles spindle microtubules and organizes the rod-like NDC80 complexes of the outer kinetochore (By similarity). DASH complex oligomerization strengthens microtubule attachments (By similarity). On cytoplasmic microtubules, DASH complexes appear to form patches instead of rings (PubMed:20624975).</text>
</comment>
<comment type="subcellular location">
    <subcellularLocation>
        <location evidence="1">Nucleus</location>
    </subcellularLocation>
    <subcellularLocation>
        <location evidence="1">Cytoplasm</location>
        <location evidence="1">Cytoskeleton</location>
        <location evidence="1">Spindle</location>
    </subcellularLocation>
    <subcellularLocation>
        <location evidence="1">Chromosome</location>
        <location evidence="1">Centromere</location>
        <location evidence="1">Kinetochore</location>
    </subcellularLocation>
    <subcellularLocation>
        <location evidence="9">Cytoplasm</location>
        <location evidence="9">Cytoskeleton</location>
    </subcellularLocation>
    <text evidence="1 9">Associates with the mitotic spindle and the kinetochore (By similarity). In the cytoskeleton, localizes to cortical microtubules (Probable).</text>
</comment>
<comment type="disruption phenotype">
    <text evidence="5">Sensitive to thiabendazole and osmotic stress.</text>
</comment>
<comment type="similarity">
    <text evidence="8">Belongs to the DASH complex DUO1 family.</text>
</comment>
<comment type="sequence caution" evidence="8">
    <conflict type="frameshift">
        <sequence resource="EMBL-CDS" id="CAA19369"/>
    </conflict>
</comment>
<sequence length="282" mass="31909">MTSELQQELQILRSFNYTIEKLTDGLSASKEKIKSFETSINNSNRLIQLWSSVLSQTEHTQNLILNSDWKGLSFDNEELERLQHQKMLQIQAEEQRKIELQQEQERLEQERRQKEEAIALQKQQQQRLLRSKDPKVRPARRAASSYVPSRPSHVPRSSSMNVRSRVSMATTSNPNSLRTPSSSFASHRQSAIPKSATSSAPTIPTSNLPSVASSIPNNGLNSSNRKSIISKTSSRLRPPSRVSNVPSVPQHPSTRSRTSTRETTQPPFTTNPSNRSKRTTLR</sequence>
<proteinExistence type="evidence at protein level"/>
<accession>O74372</accession>
<dbReference type="EMBL" id="CU329671">
    <property type="protein sequence ID" value="CAA19369.1"/>
    <property type="status" value="ALT_FRAME"/>
    <property type="molecule type" value="Genomic_DNA"/>
</dbReference>
<dbReference type="PIR" id="T40232">
    <property type="entry name" value="T40232"/>
</dbReference>
<dbReference type="SMR" id="O74372"/>
<dbReference type="ComplexPortal" id="CPX-10081">
    <property type="entry name" value="DASH complex"/>
</dbReference>
<dbReference type="FunCoup" id="O74372">
    <property type="interactions" value="4"/>
</dbReference>
<dbReference type="IntAct" id="O74372">
    <property type="interactions" value="8"/>
</dbReference>
<dbReference type="STRING" id="284812.O74372"/>
<dbReference type="PaxDb" id="4896-SPBC32F12.08c.1"/>
<dbReference type="PomBase" id="SPBC32F12.08c">
    <property type="gene designation" value="duo1"/>
</dbReference>
<dbReference type="eggNOG" id="ENOG502SCC0">
    <property type="taxonomic scope" value="Eukaryota"/>
</dbReference>
<dbReference type="InParanoid" id="O74372"/>
<dbReference type="PRO" id="PR:O74372"/>
<dbReference type="Proteomes" id="UP000002485">
    <property type="component" value="Chromosome II"/>
</dbReference>
<dbReference type="GO" id="GO:0005737">
    <property type="term" value="C:cytoplasm"/>
    <property type="evidence" value="ECO:0007669"/>
    <property type="project" value="UniProtKB-KW"/>
</dbReference>
<dbReference type="GO" id="GO:0042729">
    <property type="term" value="C:DASH complex"/>
    <property type="evidence" value="ECO:0000314"/>
    <property type="project" value="PomBase"/>
</dbReference>
<dbReference type="GO" id="GO:0005874">
    <property type="term" value="C:microtubule"/>
    <property type="evidence" value="ECO:0007669"/>
    <property type="project" value="UniProtKB-KW"/>
</dbReference>
<dbReference type="GO" id="GO:0072686">
    <property type="term" value="C:mitotic spindle"/>
    <property type="evidence" value="ECO:0007669"/>
    <property type="project" value="InterPro"/>
</dbReference>
<dbReference type="GO" id="GO:0008608">
    <property type="term" value="P:attachment of spindle microtubules to kinetochore"/>
    <property type="evidence" value="ECO:0000250"/>
    <property type="project" value="UniProtKB"/>
</dbReference>
<dbReference type="GO" id="GO:0051301">
    <property type="term" value="P:cell division"/>
    <property type="evidence" value="ECO:0007669"/>
    <property type="project" value="UniProtKB-KW"/>
</dbReference>
<dbReference type="GO" id="GO:1990758">
    <property type="term" value="P:mitotic sister chromatid biorientation"/>
    <property type="evidence" value="ECO:0000269"/>
    <property type="project" value="UniProtKB"/>
</dbReference>
<dbReference type="GO" id="GO:1990976">
    <property type="term" value="P:protein transport along microtubule to mitotic spindle pole body"/>
    <property type="evidence" value="ECO:0000250"/>
    <property type="project" value="UniProtKB"/>
</dbReference>
<dbReference type="GO" id="GO:0051455">
    <property type="term" value="P:spindle attachment to meiosis I kinetochore"/>
    <property type="evidence" value="ECO:0000305"/>
    <property type="project" value="PomBase"/>
</dbReference>
<dbReference type="InterPro" id="IPR013960">
    <property type="entry name" value="DASH_Duo1"/>
</dbReference>
<dbReference type="PANTHER" id="PTHR28216">
    <property type="entry name" value="DASH COMPLEX SUBUNIT DUO1"/>
    <property type="match status" value="1"/>
</dbReference>
<dbReference type="PANTHER" id="PTHR28216:SF1">
    <property type="entry name" value="DASH COMPLEX SUBUNIT DUO1"/>
    <property type="match status" value="1"/>
</dbReference>
<dbReference type="Pfam" id="PF08651">
    <property type="entry name" value="DASH_Duo1"/>
    <property type="match status" value="1"/>
</dbReference>
<feature type="chain" id="PRO_0000215594" description="DASH complex subunit duo1">
    <location>
        <begin position="1"/>
        <end position="282"/>
    </location>
</feature>
<feature type="region of interest" description="Disordered" evidence="3">
    <location>
        <begin position="118"/>
        <end position="282"/>
    </location>
</feature>
<feature type="coiled-coil region" evidence="2">
    <location>
        <begin position="75"/>
        <end position="130"/>
    </location>
</feature>
<feature type="compositionally biased region" description="Low complexity" evidence="3">
    <location>
        <begin position="118"/>
        <end position="128"/>
    </location>
</feature>
<feature type="compositionally biased region" description="Low complexity" evidence="3">
    <location>
        <begin position="144"/>
        <end position="168"/>
    </location>
</feature>
<feature type="compositionally biased region" description="Polar residues" evidence="3">
    <location>
        <begin position="169"/>
        <end position="189"/>
    </location>
</feature>
<feature type="compositionally biased region" description="Low complexity" evidence="3">
    <location>
        <begin position="195"/>
        <end position="206"/>
    </location>
</feature>
<feature type="compositionally biased region" description="Polar residues" evidence="3">
    <location>
        <begin position="207"/>
        <end position="232"/>
    </location>
</feature>
<feature type="compositionally biased region" description="Low complexity" evidence="3">
    <location>
        <begin position="233"/>
        <end position="264"/>
    </location>
</feature>
<feature type="compositionally biased region" description="Polar residues" evidence="3">
    <location>
        <begin position="265"/>
        <end position="274"/>
    </location>
</feature>
<gene>
    <name type="primary">duo1</name>
    <name type="ORF">SPBC32F12.08c</name>
</gene>